<feature type="chain" id="PRO_0000327827" description="Isopentenyl-diphosphate Delta-isomerase">
    <location>
        <begin position="1"/>
        <end position="239"/>
    </location>
</feature>
<feature type="domain" description="Nudix hydrolase" evidence="2">
    <location>
        <begin position="56"/>
        <end position="210"/>
    </location>
</feature>
<feature type="active site" evidence="1">
    <location>
        <position position="93"/>
    </location>
</feature>
<feature type="active site" evidence="1">
    <location>
        <position position="158"/>
    </location>
</feature>
<feature type="binding site" evidence="1">
    <location>
        <position position="43"/>
    </location>
    <ligand>
        <name>substrate</name>
    </ligand>
</feature>
<feature type="binding site" evidence="1">
    <location>
        <position position="47"/>
    </location>
    <ligand>
        <name>Mg(2+)</name>
        <dbReference type="ChEBI" id="CHEBI:18420"/>
    </ligand>
</feature>
<feature type="binding site" evidence="1">
    <location>
        <position position="58"/>
    </location>
    <ligand>
        <name>Mg(2+)</name>
        <dbReference type="ChEBI" id="CHEBI:18420"/>
    </ligand>
</feature>
<feature type="binding site" evidence="1">
    <location>
        <position position="77"/>
    </location>
    <ligand>
        <name>substrate</name>
    </ligand>
</feature>
<feature type="binding site" evidence="1">
    <location>
        <position position="81"/>
    </location>
    <ligand>
        <name>substrate</name>
    </ligand>
</feature>
<feature type="binding site" evidence="1">
    <location>
        <position position="94"/>
    </location>
    <ligand>
        <name>substrate</name>
    </ligand>
</feature>
<feature type="binding site" evidence="1">
    <location>
        <position position="156"/>
    </location>
    <ligand>
        <name>Mg(2+)</name>
        <dbReference type="ChEBI" id="CHEBI:18420"/>
    </ligand>
</feature>
<feature type="binding site" evidence="1">
    <location>
        <position position="158"/>
    </location>
    <ligand>
        <name>Mg(2+)</name>
        <dbReference type="ChEBI" id="CHEBI:18420"/>
    </ligand>
</feature>
<comment type="function">
    <text evidence="1">Catalyzes the 1,3-allylic rearrangement of the homoallylic substrate isopentenyl (IPP) to its highly electrophilic allylic isomer, dimethylallyl diphosphate (DMAPP).</text>
</comment>
<comment type="catalytic activity">
    <reaction>
        <text>isopentenyl diphosphate = dimethylallyl diphosphate</text>
        <dbReference type="Rhea" id="RHEA:23284"/>
        <dbReference type="ChEBI" id="CHEBI:57623"/>
        <dbReference type="ChEBI" id="CHEBI:128769"/>
        <dbReference type="EC" id="5.3.3.2"/>
    </reaction>
</comment>
<comment type="cofactor">
    <cofactor evidence="1">
        <name>Mg(2+)</name>
        <dbReference type="ChEBI" id="CHEBI:18420"/>
    </cofactor>
    <text evidence="1">Binds 1 Mg(2+) ion per subunit.</text>
</comment>
<comment type="pathway">
    <text>Isoprenoid biosynthesis; dimethylallyl diphosphate biosynthesis; dimethylallyl diphosphate from isopentenyl diphosphate: step 1/1.</text>
</comment>
<comment type="similarity">
    <text evidence="3">Belongs to the IPP isomerase type 1 family.</text>
</comment>
<keyword id="KW-0413">Isomerase</keyword>
<keyword id="KW-0414">Isoprene biosynthesis</keyword>
<keyword id="KW-0444">Lipid biosynthesis</keyword>
<keyword id="KW-0443">Lipid metabolism</keyword>
<keyword id="KW-0460">Magnesium</keyword>
<keyword id="KW-0479">Metal-binding</keyword>
<keyword id="KW-1185">Reference proteome</keyword>
<keyword id="KW-0752">Steroid biosynthesis</keyword>
<keyword id="KW-0753">Steroid metabolism</keyword>
<keyword id="KW-0756">Sterol biosynthesis</keyword>
<keyword id="KW-1207">Sterol metabolism</keyword>
<organism>
    <name type="scientific">Dictyostelium discoideum</name>
    <name type="common">Social amoeba</name>
    <dbReference type="NCBI Taxonomy" id="44689"/>
    <lineage>
        <taxon>Eukaryota</taxon>
        <taxon>Amoebozoa</taxon>
        <taxon>Evosea</taxon>
        <taxon>Eumycetozoa</taxon>
        <taxon>Dictyostelia</taxon>
        <taxon>Dictyosteliales</taxon>
        <taxon>Dictyosteliaceae</taxon>
        <taxon>Dictyostelium</taxon>
    </lineage>
</organism>
<accession>Q9NH02</accession>
<accession>Q54GN3</accession>
<gene>
    <name type="primary">ipi</name>
    <name type="synonym">Dipi</name>
    <name type="synonym">idi</name>
    <name type="ORF">DDB_G0290011</name>
</gene>
<sequence length="239" mass="27771">MATKSNEENIAEFKGHNEIQIELMKEECIVVDNDDKPIRPGSKKETHLMVNINNGLLHRAFSIFLFNGEGKLLLQQRALEKITFPGYWTNTVCSHPLWIVGSELVEENAQGVKIAAKRKLNHELGVPLDQVNIDDFTFMTKIHYKSESKEDPQWGEHEIDHILIMQKDGITINAEPNEVMDYKYVSQEELDQLFKDEDEGKVKVTPWFRLIALNHLKPWWNNLNNLKPLVEPTNTIHRY</sequence>
<name>IDI_DICDI</name>
<dbReference type="EC" id="5.3.3.2"/>
<dbReference type="EMBL" id="AF234169">
    <property type="protein sequence ID" value="AAF37873.1"/>
    <property type="molecule type" value="mRNA"/>
</dbReference>
<dbReference type="EMBL" id="AAFI02000151">
    <property type="protein sequence ID" value="EAL62411.1"/>
    <property type="molecule type" value="Genomic_DNA"/>
</dbReference>
<dbReference type="RefSeq" id="XP_635929.1">
    <property type="nucleotide sequence ID" value="XM_630837.1"/>
</dbReference>
<dbReference type="SMR" id="Q9NH02"/>
<dbReference type="FunCoup" id="Q9NH02">
    <property type="interactions" value="759"/>
</dbReference>
<dbReference type="STRING" id="44689.Q9NH02"/>
<dbReference type="PaxDb" id="44689-DDB0191342"/>
<dbReference type="EnsemblProtists" id="EAL62411">
    <property type="protein sequence ID" value="EAL62411"/>
    <property type="gene ID" value="DDB_G0290011"/>
</dbReference>
<dbReference type="GeneID" id="8627450"/>
<dbReference type="KEGG" id="ddi:DDB_G0290011"/>
<dbReference type="dictyBase" id="DDB_G0290011">
    <property type="gene designation" value="ipi"/>
</dbReference>
<dbReference type="VEuPathDB" id="AmoebaDB:DDB_G0290011"/>
<dbReference type="eggNOG" id="KOG0142">
    <property type="taxonomic scope" value="Eukaryota"/>
</dbReference>
<dbReference type="HOGENOM" id="CLU_060552_0_2_1"/>
<dbReference type="InParanoid" id="Q9NH02"/>
<dbReference type="OMA" id="KAPFDNG"/>
<dbReference type="PhylomeDB" id="Q9NH02"/>
<dbReference type="Reactome" id="R-DDI-191273">
    <property type="pathway name" value="Cholesterol biosynthesis"/>
</dbReference>
<dbReference type="UniPathway" id="UPA00059">
    <property type="reaction ID" value="UER00104"/>
</dbReference>
<dbReference type="PRO" id="PR:Q9NH02"/>
<dbReference type="Proteomes" id="UP000002195">
    <property type="component" value="Chromosome 5"/>
</dbReference>
<dbReference type="GO" id="GO:0005737">
    <property type="term" value="C:cytoplasm"/>
    <property type="evidence" value="ECO:0000318"/>
    <property type="project" value="GO_Central"/>
</dbReference>
<dbReference type="GO" id="GO:0004452">
    <property type="term" value="F:isopentenyl-diphosphate delta-isomerase activity"/>
    <property type="evidence" value="ECO:0000318"/>
    <property type="project" value="GO_Central"/>
</dbReference>
<dbReference type="GO" id="GO:0046872">
    <property type="term" value="F:metal ion binding"/>
    <property type="evidence" value="ECO:0007669"/>
    <property type="project" value="UniProtKB-KW"/>
</dbReference>
<dbReference type="GO" id="GO:0050992">
    <property type="term" value="P:dimethylallyl diphosphate biosynthetic process"/>
    <property type="evidence" value="ECO:0007669"/>
    <property type="project" value="UniProtKB-UniPathway"/>
</dbReference>
<dbReference type="GO" id="GO:0009240">
    <property type="term" value="P:isopentenyl diphosphate biosynthetic process"/>
    <property type="evidence" value="ECO:0000318"/>
    <property type="project" value="GO_Central"/>
</dbReference>
<dbReference type="GO" id="GO:0016126">
    <property type="term" value="P:sterol biosynthetic process"/>
    <property type="evidence" value="ECO:0007669"/>
    <property type="project" value="UniProtKB-KW"/>
</dbReference>
<dbReference type="CDD" id="cd02885">
    <property type="entry name" value="NUDIX_IPP_Isomerase"/>
    <property type="match status" value="1"/>
</dbReference>
<dbReference type="FunFam" id="3.90.79.10:FF:000096">
    <property type="entry name" value="Isopentenyl-diphosphate Delta-isomerase"/>
    <property type="match status" value="1"/>
</dbReference>
<dbReference type="Gene3D" id="3.90.79.10">
    <property type="entry name" value="Nucleoside Triphosphate Pyrophosphohydrolase"/>
    <property type="match status" value="1"/>
</dbReference>
<dbReference type="InterPro" id="IPR011876">
    <property type="entry name" value="IsopentenylPP_isomerase_typ1"/>
</dbReference>
<dbReference type="InterPro" id="IPR015797">
    <property type="entry name" value="NUDIX_hydrolase-like_dom_sf"/>
</dbReference>
<dbReference type="InterPro" id="IPR000086">
    <property type="entry name" value="NUDIX_hydrolase_dom"/>
</dbReference>
<dbReference type="NCBIfam" id="TIGR02150">
    <property type="entry name" value="IPP_isom_1"/>
    <property type="match status" value="1"/>
</dbReference>
<dbReference type="PANTHER" id="PTHR10885">
    <property type="entry name" value="ISOPENTENYL-DIPHOSPHATE DELTA-ISOMERASE"/>
    <property type="match status" value="1"/>
</dbReference>
<dbReference type="PANTHER" id="PTHR10885:SF0">
    <property type="entry name" value="ISOPENTENYL-DIPHOSPHATE DELTA-ISOMERASE"/>
    <property type="match status" value="1"/>
</dbReference>
<dbReference type="Pfam" id="PF00293">
    <property type="entry name" value="NUDIX"/>
    <property type="match status" value="1"/>
</dbReference>
<dbReference type="PIRSF" id="PIRSF018427">
    <property type="entry name" value="Isopntndiph_ism"/>
    <property type="match status" value="1"/>
</dbReference>
<dbReference type="SUPFAM" id="SSF55811">
    <property type="entry name" value="Nudix"/>
    <property type="match status" value="1"/>
</dbReference>
<dbReference type="PROSITE" id="PS51462">
    <property type="entry name" value="NUDIX"/>
    <property type="match status" value="1"/>
</dbReference>
<proteinExistence type="evidence at transcript level"/>
<reference key="1">
    <citation type="journal article" date="2000" name="J. Bone Miner. Res.">
        <title>The intracellular target for the antiresorptive aminobisphosphonate drugs in Dictyostelium discoideum is the enzyme farnesyl diphosphate synthase.</title>
        <authorList>
            <person name="Grove J.E."/>
            <person name="Brown R.J."/>
            <person name="Watts D.J."/>
        </authorList>
    </citation>
    <scope>NUCLEOTIDE SEQUENCE [MRNA]</scope>
</reference>
<reference key="2">
    <citation type="journal article" date="2005" name="Nature">
        <title>The genome of the social amoeba Dictyostelium discoideum.</title>
        <authorList>
            <person name="Eichinger L."/>
            <person name="Pachebat J.A."/>
            <person name="Gloeckner G."/>
            <person name="Rajandream M.A."/>
            <person name="Sucgang R."/>
            <person name="Berriman M."/>
            <person name="Song J."/>
            <person name="Olsen R."/>
            <person name="Szafranski K."/>
            <person name="Xu Q."/>
            <person name="Tunggal B."/>
            <person name="Kummerfeld S."/>
            <person name="Madera M."/>
            <person name="Konfortov B.A."/>
            <person name="Rivero F."/>
            <person name="Bankier A.T."/>
            <person name="Lehmann R."/>
            <person name="Hamlin N."/>
            <person name="Davies R."/>
            <person name="Gaudet P."/>
            <person name="Fey P."/>
            <person name="Pilcher K."/>
            <person name="Chen G."/>
            <person name="Saunders D."/>
            <person name="Sodergren E.J."/>
            <person name="Davis P."/>
            <person name="Kerhornou A."/>
            <person name="Nie X."/>
            <person name="Hall N."/>
            <person name="Anjard C."/>
            <person name="Hemphill L."/>
            <person name="Bason N."/>
            <person name="Farbrother P."/>
            <person name="Desany B."/>
            <person name="Just E."/>
            <person name="Morio T."/>
            <person name="Rost R."/>
            <person name="Churcher C.M."/>
            <person name="Cooper J."/>
            <person name="Haydock S."/>
            <person name="van Driessche N."/>
            <person name="Cronin A."/>
            <person name="Goodhead I."/>
            <person name="Muzny D.M."/>
            <person name="Mourier T."/>
            <person name="Pain A."/>
            <person name="Lu M."/>
            <person name="Harper D."/>
            <person name="Lindsay R."/>
            <person name="Hauser H."/>
            <person name="James K.D."/>
            <person name="Quiles M."/>
            <person name="Madan Babu M."/>
            <person name="Saito T."/>
            <person name="Buchrieser C."/>
            <person name="Wardroper A."/>
            <person name="Felder M."/>
            <person name="Thangavelu M."/>
            <person name="Johnson D."/>
            <person name="Knights A."/>
            <person name="Loulseged H."/>
            <person name="Mungall K.L."/>
            <person name="Oliver K."/>
            <person name="Price C."/>
            <person name="Quail M.A."/>
            <person name="Urushihara H."/>
            <person name="Hernandez J."/>
            <person name="Rabbinowitsch E."/>
            <person name="Steffen D."/>
            <person name="Sanders M."/>
            <person name="Ma J."/>
            <person name="Kohara Y."/>
            <person name="Sharp S."/>
            <person name="Simmonds M.N."/>
            <person name="Spiegler S."/>
            <person name="Tivey A."/>
            <person name="Sugano S."/>
            <person name="White B."/>
            <person name="Walker D."/>
            <person name="Woodward J.R."/>
            <person name="Winckler T."/>
            <person name="Tanaka Y."/>
            <person name="Shaulsky G."/>
            <person name="Schleicher M."/>
            <person name="Weinstock G.M."/>
            <person name="Rosenthal A."/>
            <person name="Cox E.C."/>
            <person name="Chisholm R.L."/>
            <person name="Gibbs R.A."/>
            <person name="Loomis W.F."/>
            <person name="Platzer M."/>
            <person name="Kay R.R."/>
            <person name="Williams J.G."/>
            <person name="Dear P.H."/>
            <person name="Noegel A.A."/>
            <person name="Barrell B.G."/>
            <person name="Kuspa A."/>
        </authorList>
    </citation>
    <scope>NUCLEOTIDE SEQUENCE [LARGE SCALE GENOMIC DNA]</scope>
    <source>
        <strain>AX4</strain>
    </source>
</reference>
<protein>
    <recommendedName>
        <fullName>Isopentenyl-diphosphate Delta-isomerase</fullName>
        <ecNumber>5.3.3.2</ecNumber>
    </recommendedName>
    <alternativeName>
        <fullName>Isopentenyl pyrophosphate isomerase</fullName>
        <shortName>IPP isomerase</shortName>
        <shortName>IPPI</shortName>
    </alternativeName>
</protein>
<evidence type="ECO:0000250" key="1"/>
<evidence type="ECO:0000255" key="2">
    <source>
        <dbReference type="PROSITE-ProRule" id="PRU00794"/>
    </source>
</evidence>
<evidence type="ECO:0000305" key="3"/>